<name>RLMD_VIBVY</name>
<protein>
    <recommendedName>
        <fullName evidence="1">23S rRNA (uracil(1939)-C(5))-methyltransferase RlmD</fullName>
        <ecNumber evidence="1">2.1.1.190</ecNumber>
    </recommendedName>
    <alternativeName>
        <fullName evidence="1">23S rRNA(m5U1939)-methyltransferase</fullName>
    </alternativeName>
</protein>
<proteinExistence type="inferred from homology"/>
<sequence length="438" mass="49216">MARFFQPKKKLQPESKHQQVLVEKLDHQGAGIAYLNKKPLFIDGTLPGEEVVTQLTESKSKFARGKLIKLLKPAAERVEPFCSHFNQCGGCDMQHMDYQAQLAYKQRTLLQLMKKFSGSEILLSPPVTGLEKAYRRRARVSLMWDKKSRQLQFGFRRKQSKQIENVTQCPVLVAELECLLPELKAILSHFHHPEHLGHVELVAADNGAVITLRHTGPLLDEDVAKLRQCAEQHQATLYLMPASDQLERISGEAPYYQEIGFKVPFEPNNFIQVNQKVNQQMVVQALEWLDPQSSDRVLDLFCGLGNFSLPIASKAKSVTGVEGVDDMVQKAALNASLNQINNAQFFHANLEQDFVGQPWASEKFDKILLDPARAGASGIIEQVSALGAKRVVYVSCNPATLARDSQSLLEQGYRLTKLGMLDMFPYTSHLESMALFEK</sequence>
<accession>Q7MHP7</accession>
<gene>
    <name evidence="1" type="primary">rlmD</name>
    <name type="synonym">rumA</name>
    <name type="ordered locus">VV2822</name>
</gene>
<organism>
    <name type="scientific">Vibrio vulnificus (strain YJ016)</name>
    <dbReference type="NCBI Taxonomy" id="196600"/>
    <lineage>
        <taxon>Bacteria</taxon>
        <taxon>Pseudomonadati</taxon>
        <taxon>Pseudomonadota</taxon>
        <taxon>Gammaproteobacteria</taxon>
        <taxon>Vibrionales</taxon>
        <taxon>Vibrionaceae</taxon>
        <taxon>Vibrio</taxon>
    </lineage>
</organism>
<comment type="function">
    <text evidence="1">Catalyzes the formation of 5-methyl-uridine at position 1939 (m5U1939) in 23S rRNA.</text>
</comment>
<comment type="catalytic activity">
    <reaction evidence="1">
        <text>uridine(1939) in 23S rRNA + S-adenosyl-L-methionine = 5-methyluridine(1939) in 23S rRNA + S-adenosyl-L-homocysteine + H(+)</text>
        <dbReference type="Rhea" id="RHEA:42908"/>
        <dbReference type="Rhea" id="RHEA-COMP:10278"/>
        <dbReference type="Rhea" id="RHEA-COMP:10279"/>
        <dbReference type="ChEBI" id="CHEBI:15378"/>
        <dbReference type="ChEBI" id="CHEBI:57856"/>
        <dbReference type="ChEBI" id="CHEBI:59789"/>
        <dbReference type="ChEBI" id="CHEBI:65315"/>
        <dbReference type="ChEBI" id="CHEBI:74447"/>
        <dbReference type="EC" id="2.1.1.190"/>
    </reaction>
</comment>
<comment type="similarity">
    <text evidence="1">Belongs to the class I-like SAM-binding methyltransferase superfamily. RNA M5U methyltransferase family. RlmD subfamily.</text>
</comment>
<comment type="sequence caution" evidence="2">
    <conflict type="erroneous initiation">
        <sequence resource="EMBL-CDS" id="BAC95586"/>
    </conflict>
</comment>
<evidence type="ECO:0000255" key="1">
    <source>
        <dbReference type="HAMAP-Rule" id="MF_01010"/>
    </source>
</evidence>
<evidence type="ECO:0000305" key="2"/>
<keyword id="KW-0004">4Fe-4S</keyword>
<keyword id="KW-0408">Iron</keyword>
<keyword id="KW-0411">Iron-sulfur</keyword>
<keyword id="KW-0479">Metal-binding</keyword>
<keyword id="KW-0489">Methyltransferase</keyword>
<keyword id="KW-0698">rRNA processing</keyword>
<keyword id="KW-0949">S-adenosyl-L-methionine</keyword>
<keyword id="KW-0808">Transferase</keyword>
<dbReference type="EC" id="2.1.1.190" evidence="1"/>
<dbReference type="EMBL" id="BA000037">
    <property type="protein sequence ID" value="BAC95586.1"/>
    <property type="status" value="ALT_INIT"/>
    <property type="molecule type" value="Genomic_DNA"/>
</dbReference>
<dbReference type="RefSeq" id="WP_043877316.1">
    <property type="nucleotide sequence ID" value="NC_005139.1"/>
</dbReference>
<dbReference type="SMR" id="Q7MHP7"/>
<dbReference type="STRING" id="672.VV93_v1c25310"/>
<dbReference type="KEGG" id="vvy:VV2822"/>
<dbReference type="PATRIC" id="fig|196600.6.peg.2811"/>
<dbReference type="eggNOG" id="COG2265">
    <property type="taxonomic scope" value="Bacteria"/>
</dbReference>
<dbReference type="HOGENOM" id="CLU_014689_8_2_6"/>
<dbReference type="Proteomes" id="UP000002675">
    <property type="component" value="Chromosome I"/>
</dbReference>
<dbReference type="GO" id="GO:0051539">
    <property type="term" value="F:4 iron, 4 sulfur cluster binding"/>
    <property type="evidence" value="ECO:0007669"/>
    <property type="project" value="UniProtKB-KW"/>
</dbReference>
<dbReference type="GO" id="GO:0005506">
    <property type="term" value="F:iron ion binding"/>
    <property type="evidence" value="ECO:0007669"/>
    <property type="project" value="UniProtKB-UniRule"/>
</dbReference>
<dbReference type="GO" id="GO:0003723">
    <property type="term" value="F:RNA binding"/>
    <property type="evidence" value="ECO:0007669"/>
    <property type="project" value="InterPro"/>
</dbReference>
<dbReference type="GO" id="GO:0070041">
    <property type="term" value="F:rRNA (uridine-C5-)-methyltransferase activity"/>
    <property type="evidence" value="ECO:0007669"/>
    <property type="project" value="UniProtKB-UniRule"/>
</dbReference>
<dbReference type="GO" id="GO:0070475">
    <property type="term" value="P:rRNA base methylation"/>
    <property type="evidence" value="ECO:0007669"/>
    <property type="project" value="TreeGrafter"/>
</dbReference>
<dbReference type="CDD" id="cd02440">
    <property type="entry name" value="AdoMet_MTases"/>
    <property type="match status" value="1"/>
</dbReference>
<dbReference type="FunFam" id="3.40.50.150:FF:000009">
    <property type="entry name" value="23S rRNA (Uracil(1939)-C(5))-methyltransferase RlmD"/>
    <property type="match status" value="1"/>
</dbReference>
<dbReference type="FunFam" id="2.40.50.140:FF:000097">
    <property type="entry name" value="23S rRNA (uracil(1939)-C(5))-methyltransferase RlmD"/>
    <property type="match status" value="1"/>
</dbReference>
<dbReference type="Gene3D" id="2.40.50.1070">
    <property type="match status" value="1"/>
</dbReference>
<dbReference type="Gene3D" id="2.40.50.140">
    <property type="entry name" value="Nucleic acid-binding proteins"/>
    <property type="match status" value="1"/>
</dbReference>
<dbReference type="Gene3D" id="3.40.50.150">
    <property type="entry name" value="Vaccinia Virus protein VP39"/>
    <property type="match status" value="1"/>
</dbReference>
<dbReference type="HAMAP" id="MF_01010">
    <property type="entry name" value="23SrRNA_methyltr_RlmD"/>
    <property type="match status" value="1"/>
</dbReference>
<dbReference type="InterPro" id="IPR001566">
    <property type="entry name" value="23S_rRNA_MeTrfase_RlmD"/>
</dbReference>
<dbReference type="InterPro" id="IPR030390">
    <property type="entry name" value="MeTrfase_TrmA_AS"/>
</dbReference>
<dbReference type="InterPro" id="IPR030391">
    <property type="entry name" value="MeTrfase_TrmA_CS"/>
</dbReference>
<dbReference type="InterPro" id="IPR012340">
    <property type="entry name" value="NA-bd_OB-fold"/>
</dbReference>
<dbReference type="InterPro" id="IPR029063">
    <property type="entry name" value="SAM-dependent_MTases_sf"/>
</dbReference>
<dbReference type="InterPro" id="IPR002792">
    <property type="entry name" value="TRAM_dom"/>
</dbReference>
<dbReference type="InterPro" id="IPR010280">
    <property type="entry name" value="U5_MeTrfase_fam"/>
</dbReference>
<dbReference type="NCBIfam" id="NF009639">
    <property type="entry name" value="PRK13168.1"/>
    <property type="match status" value="1"/>
</dbReference>
<dbReference type="NCBIfam" id="TIGR00479">
    <property type="entry name" value="rumA"/>
    <property type="match status" value="1"/>
</dbReference>
<dbReference type="PANTHER" id="PTHR11061:SF49">
    <property type="entry name" value="23S RRNA (URACIL(1939)-C(5))-METHYLTRANSFERASE RLMD"/>
    <property type="match status" value="1"/>
</dbReference>
<dbReference type="PANTHER" id="PTHR11061">
    <property type="entry name" value="RNA M5U METHYLTRANSFERASE"/>
    <property type="match status" value="1"/>
</dbReference>
<dbReference type="Pfam" id="PF01938">
    <property type="entry name" value="TRAM"/>
    <property type="match status" value="1"/>
</dbReference>
<dbReference type="Pfam" id="PF05958">
    <property type="entry name" value="tRNA_U5-meth_tr"/>
    <property type="match status" value="1"/>
</dbReference>
<dbReference type="SUPFAM" id="SSF50249">
    <property type="entry name" value="Nucleic acid-binding proteins"/>
    <property type="match status" value="1"/>
</dbReference>
<dbReference type="SUPFAM" id="SSF53335">
    <property type="entry name" value="S-adenosyl-L-methionine-dependent methyltransferases"/>
    <property type="match status" value="1"/>
</dbReference>
<dbReference type="PROSITE" id="PS51687">
    <property type="entry name" value="SAM_MT_RNA_M5U"/>
    <property type="match status" value="1"/>
</dbReference>
<dbReference type="PROSITE" id="PS50926">
    <property type="entry name" value="TRAM"/>
    <property type="match status" value="1"/>
</dbReference>
<dbReference type="PROSITE" id="PS01230">
    <property type="entry name" value="TRMA_1"/>
    <property type="match status" value="1"/>
</dbReference>
<dbReference type="PROSITE" id="PS01231">
    <property type="entry name" value="TRMA_2"/>
    <property type="match status" value="1"/>
</dbReference>
<feature type="chain" id="PRO_0000161920" description="23S rRNA (uracil(1939)-C(5))-methyltransferase RlmD">
    <location>
        <begin position="1"/>
        <end position="438"/>
    </location>
</feature>
<feature type="domain" description="TRAM" evidence="1">
    <location>
        <begin position="11"/>
        <end position="69"/>
    </location>
</feature>
<feature type="active site" description="Nucleophile" evidence="1">
    <location>
        <position position="396"/>
    </location>
</feature>
<feature type="binding site" evidence="1">
    <location>
        <position position="82"/>
    </location>
    <ligand>
        <name>[4Fe-4S] cluster</name>
        <dbReference type="ChEBI" id="CHEBI:49883"/>
    </ligand>
</feature>
<feature type="binding site" evidence="1">
    <location>
        <position position="88"/>
    </location>
    <ligand>
        <name>[4Fe-4S] cluster</name>
        <dbReference type="ChEBI" id="CHEBI:49883"/>
    </ligand>
</feature>
<feature type="binding site" evidence="1">
    <location>
        <position position="91"/>
    </location>
    <ligand>
        <name>[4Fe-4S] cluster</name>
        <dbReference type="ChEBI" id="CHEBI:49883"/>
    </ligand>
</feature>
<feature type="binding site" evidence="1">
    <location>
        <position position="169"/>
    </location>
    <ligand>
        <name>[4Fe-4S] cluster</name>
        <dbReference type="ChEBI" id="CHEBI:49883"/>
    </ligand>
</feature>
<feature type="binding site" evidence="1">
    <location>
        <position position="272"/>
    </location>
    <ligand>
        <name>S-adenosyl-L-methionine</name>
        <dbReference type="ChEBI" id="CHEBI:59789"/>
    </ligand>
</feature>
<feature type="binding site" evidence="1">
    <location>
        <position position="301"/>
    </location>
    <ligand>
        <name>S-adenosyl-L-methionine</name>
        <dbReference type="ChEBI" id="CHEBI:59789"/>
    </ligand>
</feature>
<feature type="binding site" evidence="1">
    <location>
        <position position="306"/>
    </location>
    <ligand>
        <name>S-adenosyl-L-methionine</name>
        <dbReference type="ChEBI" id="CHEBI:59789"/>
    </ligand>
</feature>
<feature type="binding site" evidence="1">
    <location>
        <position position="322"/>
    </location>
    <ligand>
        <name>S-adenosyl-L-methionine</name>
        <dbReference type="ChEBI" id="CHEBI:59789"/>
    </ligand>
</feature>
<feature type="binding site" evidence="1">
    <location>
        <position position="349"/>
    </location>
    <ligand>
        <name>S-adenosyl-L-methionine</name>
        <dbReference type="ChEBI" id="CHEBI:59789"/>
    </ligand>
</feature>
<feature type="binding site" evidence="1">
    <location>
        <position position="370"/>
    </location>
    <ligand>
        <name>S-adenosyl-L-methionine</name>
        <dbReference type="ChEBI" id="CHEBI:59789"/>
    </ligand>
</feature>
<reference key="1">
    <citation type="journal article" date="2003" name="Genome Res.">
        <title>Comparative genome analysis of Vibrio vulnificus, a marine pathogen.</title>
        <authorList>
            <person name="Chen C.-Y."/>
            <person name="Wu K.-M."/>
            <person name="Chang Y.-C."/>
            <person name="Chang C.-H."/>
            <person name="Tsai H.-C."/>
            <person name="Liao T.-L."/>
            <person name="Liu Y.-M."/>
            <person name="Chen H.-J."/>
            <person name="Shen A.B.-T."/>
            <person name="Li J.-C."/>
            <person name="Su T.-L."/>
            <person name="Shao C.-P."/>
            <person name="Lee C.-T."/>
            <person name="Hor L.-I."/>
            <person name="Tsai S.-F."/>
        </authorList>
    </citation>
    <scope>NUCLEOTIDE SEQUENCE [LARGE SCALE GENOMIC DNA]</scope>
    <source>
        <strain>YJ016</strain>
    </source>
</reference>